<feature type="transit peptide" description="Mitochondrion" evidence="2">
    <location>
        <begin position="1"/>
        <end position="32"/>
    </location>
</feature>
<feature type="chain" id="PRO_0000421462" description="Probable 3-deoxy-D-manno-octulosonic acid transferase, mitochondrial">
    <location>
        <begin position="33"/>
        <end position="447"/>
    </location>
</feature>
<feature type="active site" description="Proton acceptor" evidence="1">
    <location>
        <position position="66"/>
    </location>
</feature>
<feature type="binding site" evidence="1">
    <location>
        <begin position="278"/>
        <end position="279"/>
    </location>
    <ligand>
        <name>CMP</name>
        <dbReference type="ChEBI" id="CHEBI:60377"/>
    </ligand>
</feature>
<feature type="binding site" evidence="1">
    <location>
        <begin position="320"/>
        <end position="322"/>
    </location>
    <ligand>
        <name>CMP</name>
        <dbReference type="ChEBI" id="CHEBI:60377"/>
    </ligand>
</feature>
<feature type="binding site" evidence="1">
    <location>
        <begin position="347"/>
        <end position="350"/>
    </location>
    <ligand>
        <name>CMP</name>
        <dbReference type="ChEBI" id="CHEBI:60377"/>
    </ligand>
</feature>
<feature type="site" description="Transition state stabilizer" evidence="1">
    <location>
        <position position="136"/>
    </location>
</feature>
<feature type="site" description="Transition state stabilizer" evidence="1">
    <location>
        <position position="216"/>
    </location>
</feature>
<name>KDTA_ARATH</name>
<evidence type="ECO:0000250" key="1"/>
<evidence type="ECO:0000255" key="2"/>
<evidence type="ECO:0000269" key="3">
    <source>
    </source>
</evidence>
<evidence type="ECO:0000269" key="4">
    <source>
    </source>
</evidence>
<evidence type="ECO:0000305" key="5"/>
<keyword id="KW-0328">Glycosyltransferase</keyword>
<keyword id="KW-0441">Lipid A biosynthesis</keyword>
<keyword id="KW-0444">Lipid biosynthesis</keyword>
<keyword id="KW-0443">Lipid metabolism</keyword>
<keyword id="KW-0496">Mitochondrion</keyword>
<keyword id="KW-1185">Reference proteome</keyword>
<keyword id="KW-0808">Transferase</keyword>
<keyword id="KW-0809">Transit peptide</keyword>
<dbReference type="EC" id="2.4.99.12"/>
<dbReference type="EC" id="2.4.99.13"/>
<dbReference type="EMBL" id="AB005235">
    <property type="protein sequence ID" value="BAB08602.1"/>
    <property type="status" value="ALT_SEQ"/>
    <property type="molecule type" value="Genomic_DNA"/>
</dbReference>
<dbReference type="EMBL" id="AL162506">
    <property type="protein sequence ID" value="CAB82942.1"/>
    <property type="status" value="ALT_SEQ"/>
    <property type="molecule type" value="Genomic_DNA"/>
</dbReference>
<dbReference type="EMBL" id="CP002688">
    <property type="protein sequence ID" value="AED90652.1"/>
    <property type="molecule type" value="Genomic_DNA"/>
</dbReference>
<dbReference type="EMBL" id="AY065115">
    <property type="protein sequence ID" value="AAL38291.1"/>
    <property type="molecule type" value="mRNA"/>
</dbReference>
<dbReference type="EMBL" id="AY128758">
    <property type="protein sequence ID" value="AAM91158.1"/>
    <property type="molecule type" value="mRNA"/>
</dbReference>
<dbReference type="PIR" id="T48404">
    <property type="entry name" value="T48404"/>
</dbReference>
<dbReference type="RefSeq" id="NP_195997.2">
    <property type="nucleotide sequence ID" value="NM_120458.3"/>
</dbReference>
<dbReference type="SMR" id="Q8VZA5"/>
<dbReference type="FunCoup" id="Q8VZA5">
    <property type="interactions" value="27"/>
</dbReference>
<dbReference type="STRING" id="3702.Q8VZA5"/>
<dbReference type="CAZy" id="GT30">
    <property type="family name" value="Glycosyltransferase Family 30"/>
</dbReference>
<dbReference type="PaxDb" id="3702-AT5G03770.1"/>
<dbReference type="ProteomicsDB" id="250745"/>
<dbReference type="EnsemblPlants" id="AT5G03770.1">
    <property type="protein sequence ID" value="AT5G03770.1"/>
    <property type="gene ID" value="AT5G03770"/>
</dbReference>
<dbReference type="GeneID" id="831727"/>
<dbReference type="Gramene" id="AT5G03770.1">
    <property type="protein sequence ID" value="AT5G03770.1"/>
    <property type="gene ID" value="AT5G03770"/>
</dbReference>
<dbReference type="KEGG" id="ath:AT5G03770"/>
<dbReference type="Araport" id="AT5G03770"/>
<dbReference type="TAIR" id="AT5G03770">
    <property type="gene designation" value="KDTA"/>
</dbReference>
<dbReference type="eggNOG" id="ENOG502QSA5">
    <property type="taxonomic scope" value="Eukaryota"/>
</dbReference>
<dbReference type="HOGENOM" id="CLU_036146_1_0_1"/>
<dbReference type="InParanoid" id="Q8VZA5"/>
<dbReference type="OMA" id="FIKYEFW"/>
<dbReference type="OrthoDB" id="308383at2759"/>
<dbReference type="PhylomeDB" id="Q8VZA5"/>
<dbReference type="BioCyc" id="ARA:AT5G03770-MONOMER"/>
<dbReference type="BRENDA" id="2.4.99.12">
    <property type="organism ID" value="399"/>
</dbReference>
<dbReference type="BRENDA" id="2.4.99.13">
    <property type="organism ID" value="399"/>
</dbReference>
<dbReference type="UniPathway" id="UPA00360">
    <property type="reaction ID" value="UER00483"/>
</dbReference>
<dbReference type="UniPathway" id="UPA00360">
    <property type="reaction ID" value="UER00484"/>
</dbReference>
<dbReference type="PRO" id="PR:Q8VZA5"/>
<dbReference type="Proteomes" id="UP000006548">
    <property type="component" value="Chromosome 5"/>
</dbReference>
<dbReference type="ExpressionAtlas" id="Q8VZA5">
    <property type="expression patterns" value="baseline and differential"/>
</dbReference>
<dbReference type="GO" id="GO:0016020">
    <property type="term" value="C:membrane"/>
    <property type="evidence" value="ECO:0007669"/>
    <property type="project" value="GOC"/>
</dbReference>
<dbReference type="GO" id="GO:0005739">
    <property type="term" value="C:mitochondrion"/>
    <property type="evidence" value="ECO:0007669"/>
    <property type="project" value="UniProtKB-SubCell"/>
</dbReference>
<dbReference type="GO" id="GO:0043842">
    <property type="term" value="F:Kdo transferase activity"/>
    <property type="evidence" value="ECO:0007669"/>
    <property type="project" value="UniProtKB-EC"/>
</dbReference>
<dbReference type="GO" id="GO:0036104">
    <property type="term" value="P:Kdo2-lipid A biosynthetic process"/>
    <property type="evidence" value="ECO:0007669"/>
    <property type="project" value="UniProtKB-UniPathway"/>
</dbReference>
<dbReference type="GO" id="GO:0009245">
    <property type="term" value="P:lipid A biosynthetic process"/>
    <property type="evidence" value="ECO:0007669"/>
    <property type="project" value="UniProtKB-KW"/>
</dbReference>
<dbReference type="FunFam" id="3.40.50.11720:FF:000001">
    <property type="entry name" value="3-deoxy-D-manno-octulosonic acid transferase"/>
    <property type="match status" value="1"/>
</dbReference>
<dbReference type="FunFam" id="3.40.50.2000:FF:000032">
    <property type="entry name" value="3-deoxy-D-manno-octulosonic acid transferase"/>
    <property type="match status" value="1"/>
</dbReference>
<dbReference type="Gene3D" id="3.40.50.11720">
    <property type="entry name" value="3-Deoxy-D-manno-octulosonic-acid transferase, N-terminal domain"/>
    <property type="match status" value="1"/>
</dbReference>
<dbReference type="Gene3D" id="3.40.50.2000">
    <property type="entry name" value="Glycogen Phosphorylase B"/>
    <property type="match status" value="1"/>
</dbReference>
<dbReference type="InterPro" id="IPR007507">
    <property type="entry name" value="Glycos_transf_N"/>
</dbReference>
<dbReference type="InterPro" id="IPR038107">
    <property type="entry name" value="Glycos_transf_N_sf"/>
</dbReference>
<dbReference type="InterPro" id="IPR039901">
    <property type="entry name" value="Kdotransferase"/>
</dbReference>
<dbReference type="PANTHER" id="PTHR42755:SF1">
    <property type="entry name" value="3-DEOXY-D-MANNO-OCTULOSONIC ACID TRANSFERASE, MITOCHONDRIAL-RELATED"/>
    <property type="match status" value="1"/>
</dbReference>
<dbReference type="PANTHER" id="PTHR42755">
    <property type="entry name" value="3-DEOXY-MANNO-OCTULOSONATE CYTIDYLYLTRANSFERASE"/>
    <property type="match status" value="1"/>
</dbReference>
<dbReference type="Pfam" id="PF04413">
    <property type="entry name" value="Glycos_transf_N"/>
    <property type="match status" value="1"/>
</dbReference>
<dbReference type="SUPFAM" id="SSF53756">
    <property type="entry name" value="UDP-Glycosyltransferase/glycogen phosphorylase"/>
    <property type="match status" value="1"/>
</dbReference>
<gene>
    <name type="primary">KDTA</name>
    <name type="ordered locus">At5g03770</name>
    <name type="ORF">F17C15.190</name>
    <name type="ORF">MED24.5</name>
</gene>
<accession>Q8VZA5</accession>
<accession>Q9FFN3</accession>
<accession>Q9LZR2</accession>
<reference key="1">
    <citation type="journal article" date="1997" name="DNA Res.">
        <title>Structural analysis of Arabidopsis thaliana chromosome 5. I. Sequence features of the 1.6 Mb regions covered by twenty physically assigned P1 clones.</title>
        <authorList>
            <person name="Sato S."/>
            <person name="Kotani H."/>
            <person name="Nakamura Y."/>
            <person name="Kaneko T."/>
            <person name="Asamizu E."/>
            <person name="Fukami M."/>
            <person name="Miyajima N."/>
            <person name="Tabata S."/>
        </authorList>
    </citation>
    <scope>NUCLEOTIDE SEQUENCE [LARGE SCALE GENOMIC DNA]</scope>
    <source>
        <strain>cv. Columbia</strain>
    </source>
</reference>
<reference key="2">
    <citation type="journal article" date="2000" name="Nature">
        <title>Sequence and analysis of chromosome 5 of the plant Arabidopsis thaliana.</title>
        <authorList>
            <person name="Tabata S."/>
            <person name="Kaneko T."/>
            <person name="Nakamura Y."/>
            <person name="Kotani H."/>
            <person name="Kato T."/>
            <person name="Asamizu E."/>
            <person name="Miyajima N."/>
            <person name="Sasamoto S."/>
            <person name="Kimura T."/>
            <person name="Hosouchi T."/>
            <person name="Kawashima K."/>
            <person name="Kohara M."/>
            <person name="Matsumoto M."/>
            <person name="Matsuno A."/>
            <person name="Muraki A."/>
            <person name="Nakayama S."/>
            <person name="Nakazaki N."/>
            <person name="Naruo K."/>
            <person name="Okumura S."/>
            <person name="Shinpo S."/>
            <person name="Takeuchi C."/>
            <person name="Wada T."/>
            <person name="Watanabe A."/>
            <person name="Yamada M."/>
            <person name="Yasuda M."/>
            <person name="Sato S."/>
            <person name="de la Bastide M."/>
            <person name="Huang E."/>
            <person name="Spiegel L."/>
            <person name="Gnoj L."/>
            <person name="O'Shaughnessy A."/>
            <person name="Preston R."/>
            <person name="Habermann K."/>
            <person name="Murray J."/>
            <person name="Johnson D."/>
            <person name="Rohlfing T."/>
            <person name="Nelson J."/>
            <person name="Stoneking T."/>
            <person name="Pepin K."/>
            <person name="Spieth J."/>
            <person name="Sekhon M."/>
            <person name="Armstrong J."/>
            <person name="Becker M."/>
            <person name="Belter E."/>
            <person name="Cordum H."/>
            <person name="Cordes M."/>
            <person name="Courtney L."/>
            <person name="Courtney W."/>
            <person name="Dante M."/>
            <person name="Du H."/>
            <person name="Edwards J."/>
            <person name="Fryman J."/>
            <person name="Haakensen B."/>
            <person name="Lamar E."/>
            <person name="Latreille P."/>
            <person name="Leonard S."/>
            <person name="Meyer R."/>
            <person name="Mulvaney E."/>
            <person name="Ozersky P."/>
            <person name="Riley A."/>
            <person name="Strowmatt C."/>
            <person name="Wagner-McPherson C."/>
            <person name="Wollam A."/>
            <person name="Yoakum M."/>
            <person name="Bell M."/>
            <person name="Dedhia N."/>
            <person name="Parnell L."/>
            <person name="Shah R."/>
            <person name="Rodriguez M."/>
            <person name="Hoon See L."/>
            <person name="Vil D."/>
            <person name="Baker J."/>
            <person name="Kirchoff K."/>
            <person name="Toth K."/>
            <person name="King L."/>
            <person name="Bahret A."/>
            <person name="Miller B."/>
            <person name="Marra M.A."/>
            <person name="Martienssen R."/>
            <person name="McCombie W.R."/>
            <person name="Wilson R.K."/>
            <person name="Murphy G."/>
            <person name="Bancroft I."/>
            <person name="Volckaert G."/>
            <person name="Wambutt R."/>
            <person name="Duesterhoeft A."/>
            <person name="Stiekema W."/>
            <person name="Pohl T."/>
            <person name="Entian K.-D."/>
            <person name="Terryn N."/>
            <person name="Hartley N."/>
            <person name="Bent E."/>
            <person name="Johnson S."/>
            <person name="Langham S.-A."/>
            <person name="McCullagh B."/>
            <person name="Robben J."/>
            <person name="Grymonprez B."/>
            <person name="Zimmermann W."/>
            <person name="Ramsperger U."/>
            <person name="Wedler H."/>
            <person name="Balke K."/>
            <person name="Wedler E."/>
            <person name="Peters S."/>
            <person name="van Staveren M."/>
            <person name="Dirkse W."/>
            <person name="Mooijman P."/>
            <person name="Klein Lankhorst R."/>
            <person name="Weitzenegger T."/>
            <person name="Bothe G."/>
            <person name="Rose M."/>
            <person name="Hauf J."/>
            <person name="Berneiser S."/>
            <person name="Hempel S."/>
            <person name="Feldpausch M."/>
            <person name="Lamberth S."/>
            <person name="Villarroel R."/>
            <person name="Gielen J."/>
            <person name="Ardiles W."/>
            <person name="Bents O."/>
            <person name="Lemcke K."/>
            <person name="Kolesov G."/>
            <person name="Mayer K.F.X."/>
            <person name="Rudd S."/>
            <person name="Schoof H."/>
            <person name="Schueller C."/>
            <person name="Zaccaria P."/>
            <person name="Mewes H.-W."/>
            <person name="Bevan M."/>
            <person name="Fransz P.F."/>
        </authorList>
    </citation>
    <scope>NUCLEOTIDE SEQUENCE [LARGE SCALE GENOMIC DNA]</scope>
    <source>
        <strain>cv. Columbia</strain>
    </source>
</reference>
<reference key="3">
    <citation type="journal article" date="2017" name="Plant J.">
        <title>Araport11: a complete reannotation of the Arabidopsis thaliana reference genome.</title>
        <authorList>
            <person name="Cheng C.Y."/>
            <person name="Krishnakumar V."/>
            <person name="Chan A.P."/>
            <person name="Thibaud-Nissen F."/>
            <person name="Schobel S."/>
            <person name="Town C.D."/>
        </authorList>
    </citation>
    <scope>GENOME REANNOTATION</scope>
    <source>
        <strain>cv. Columbia</strain>
    </source>
</reference>
<reference key="4">
    <citation type="journal article" date="2003" name="Science">
        <title>Empirical analysis of transcriptional activity in the Arabidopsis genome.</title>
        <authorList>
            <person name="Yamada K."/>
            <person name="Lim J."/>
            <person name="Dale J.M."/>
            <person name="Chen H."/>
            <person name="Shinn P."/>
            <person name="Palm C.J."/>
            <person name="Southwick A.M."/>
            <person name="Wu H.C."/>
            <person name="Kim C.J."/>
            <person name="Nguyen M."/>
            <person name="Pham P.K."/>
            <person name="Cheuk R.F."/>
            <person name="Karlin-Newmann G."/>
            <person name="Liu S.X."/>
            <person name="Lam B."/>
            <person name="Sakano H."/>
            <person name="Wu T."/>
            <person name="Yu G."/>
            <person name="Miranda M."/>
            <person name="Quach H.L."/>
            <person name="Tripp M."/>
            <person name="Chang C.H."/>
            <person name="Lee J.M."/>
            <person name="Toriumi M.J."/>
            <person name="Chan M.M."/>
            <person name="Tang C.C."/>
            <person name="Onodera C.S."/>
            <person name="Deng J.M."/>
            <person name="Akiyama K."/>
            <person name="Ansari Y."/>
            <person name="Arakawa T."/>
            <person name="Banh J."/>
            <person name="Banno F."/>
            <person name="Bowser L."/>
            <person name="Brooks S.Y."/>
            <person name="Carninci P."/>
            <person name="Chao Q."/>
            <person name="Choy N."/>
            <person name="Enju A."/>
            <person name="Goldsmith A.D."/>
            <person name="Gurjal M."/>
            <person name="Hansen N.F."/>
            <person name="Hayashizaki Y."/>
            <person name="Johnson-Hopson C."/>
            <person name="Hsuan V.W."/>
            <person name="Iida K."/>
            <person name="Karnes M."/>
            <person name="Khan S."/>
            <person name="Koesema E."/>
            <person name="Ishida J."/>
            <person name="Jiang P.X."/>
            <person name="Jones T."/>
            <person name="Kawai J."/>
            <person name="Kamiya A."/>
            <person name="Meyers C."/>
            <person name="Nakajima M."/>
            <person name="Narusaka M."/>
            <person name="Seki M."/>
            <person name="Sakurai T."/>
            <person name="Satou M."/>
            <person name="Tamse R."/>
            <person name="Vaysberg M."/>
            <person name="Wallender E.K."/>
            <person name="Wong C."/>
            <person name="Yamamura Y."/>
            <person name="Yuan S."/>
            <person name="Shinozaki K."/>
            <person name="Davis R.W."/>
            <person name="Theologis A."/>
            <person name="Ecker J.R."/>
        </authorList>
    </citation>
    <scope>NUCLEOTIDE SEQUENCE [LARGE SCALE MRNA]</scope>
    <source>
        <strain>cv. Columbia</strain>
    </source>
</reference>
<reference key="5">
    <citation type="journal article" date="2010" name="Glycobiology">
        <title>Characterization of a putative 3-deoxy-D-manno-2-octulosonic acid (Kdo) transferase gene from Arabidopsis thaliana.</title>
        <authorList>
            <person name="Seveno M."/>
            <person name="Seveno-Carpentier E."/>
            <person name="Voxeur A."/>
            <person name="Menu-Bouaouiche L."/>
            <person name="Rihouey C."/>
            <person name="Delmas F."/>
            <person name="Chevalier C."/>
            <person name="Driouich A."/>
            <person name="Lerouge P."/>
        </authorList>
    </citation>
    <scope>SUBCELLULAR LOCATION</scope>
    <scope>TISSUE SPECIFICITY</scope>
    <scope>DISRUPTION PHENOTYPE</scope>
</reference>
<reference key="6">
    <citation type="journal article" date="2011" name="Proc. Natl. Acad. Sci. U.S.A.">
        <title>Pathway for lipid A biosynthesis in Arabidopsis thaliana resembling that of Escherichia coli.</title>
        <authorList>
            <person name="Li C."/>
            <person name="Guan Z."/>
            <person name="Liu D."/>
            <person name="Raetz C.R."/>
        </authorList>
    </citation>
    <scope>PATHWAY</scope>
    <scope>GENE FAMILY</scope>
    <scope>NOMENCLATURE</scope>
    <scope>DISRUPTION PHENOTYPE</scope>
</reference>
<sequence length="447" mass="49888">MKLGVFVYRLYRALTYGVSPLIHLHIRWRRLRGLEHFSRWPERFGHPSAVRPPGSLIWFHAVSLGEGMAAIPVIRHCNEVKSDLTILMTTTTVSAFEVIKNQLPVGVLHQFAPLDTPLAIDRFLGHWKPNAIIIMENELWPNLIMAASGLLIPLGLLNARMSTKSFKRWSSPLLLPLVSLLLSKFSLIAPLSTLQGIRFQLLHAPPFVINYSGDLKYVVNKFHVSSGTSESIRDLKVELAEMKVWIASSLHRGEEEVILGVHNMLLESHPDSVVIIVPRHPHHGQQIAHKLRKDGQSVALRSQNEKLTPRKTNIYVVDTLGELRELYSVAPIAVIGGSFIPGLTGHNLSEAAAAGCAVITGCHVGHFSHMVKAMQQANPLSVTQVSTKLELKEAVDLLLSNPEILETHQRASKDVYESLSSCIITNIWKLLNLHIFRGKSRNHIECK</sequence>
<protein>
    <recommendedName>
        <fullName>Probable 3-deoxy-D-manno-octulosonic acid transferase, mitochondrial</fullName>
        <shortName>AtKdtA</shortName>
        <shortName>Kdo transferase A</shortName>
        <ecNumber>2.4.99.12</ecNumber>
        <ecNumber>2.4.99.13</ecNumber>
    </recommendedName>
    <alternativeName>
        <fullName>Bifunctional Kdo transferase</fullName>
    </alternativeName>
    <alternativeName>
        <fullName>Kdo-lipid IV(A) 3-deoxy-D-manno-octulosonic acid transferase</fullName>
    </alternativeName>
    <alternativeName>
        <fullName>Lipid IV(A) 3-deoxy-D-manno-octulosonic acid transferase</fullName>
    </alternativeName>
</protein>
<organism>
    <name type="scientific">Arabidopsis thaliana</name>
    <name type="common">Mouse-ear cress</name>
    <dbReference type="NCBI Taxonomy" id="3702"/>
    <lineage>
        <taxon>Eukaryota</taxon>
        <taxon>Viridiplantae</taxon>
        <taxon>Streptophyta</taxon>
        <taxon>Embryophyta</taxon>
        <taxon>Tracheophyta</taxon>
        <taxon>Spermatophyta</taxon>
        <taxon>Magnoliopsida</taxon>
        <taxon>eudicotyledons</taxon>
        <taxon>Gunneridae</taxon>
        <taxon>Pentapetalae</taxon>
        <taxon>rosids</taxon>
        <taxon>malvids</taxon>
        <taxon>Brassicales</taxon>
        <taxon>Brassicaceae</taxon>
        <taxon>Camelineae</taxon>
        <taxon>Arabidopsis</taxon>
    </lineage>
</organism>
<comment type="function">
    <text evidence="5">Involved in the biosynthesis of lipid A, a phosphorylated glycolipid that in bacteria anchors the lipopolysaccharide to the outer membrane of the cell. Catalyzes the transfer of two 3-deoxy-D-manno-octulosonate (Kdo) residues from CMP-Kdo to lipid IV(A), the tetraacyldisaccharide-1,4'-bisphosphate precursor of lipid A. Lipid A-like molecules in plants may serve as structural components of the outer membranes of mitochondria and/or chloroplasts, or may be involved in signal transduction or plant defense responses.</text>
</comment>
<comment type="catalytic activity">
    <reaction>
        <text>lipid IVA (E. coli) + CMP-3-deoxy-beta-D-manno-octulosonate = alpha-Kdo-(2-&gt;6)-lipid IVA (E. coli) + CMP + H(+)</text>
        <dbReference type="Rhea" id="RHEA:28066"/>
        <dbReference type="ChEBI" id="CHEBI:15378"/>
        <dbReference type="ChEBI" id="CHEBI:58603"/>
        <dbReference type="ChEBI" id="CHEBI:60364"/>
        <dbReference type="ChEBI" id="CHEBI:60377"/>
        <dbReference type="ChEBI" id="CHEBI:85987"/>
        <dbReference type="EC" id="2.4.99.12"/>
    </reaction>
</comment>
<comment type="catalytic activity">
    <reaction>
        <text>alpha-Kdo-(2-&gt;6)-lipid IVA (E. coli) + CMP-3-deoxy-beta-D-manno-octulosonate = alpha-Kdo-(2-&gt;4)-alpha-Kdo-(2-&gt;6)-lipid IVA (E. coli) + CMP + H(+)</text>
        <dbReference type="Rhea" id="RHEA:28062"/>
        <dbReference type="ChEBI" id="CHEBI:15378"/>
        <dbReference type="ChEBI" id="CHEBI:60364"/>
        <dbReference type="ChEBI" id="CHEBI:60365"/>
        <dbReference type="ChEBI" id="CHEBI:60377"/>
        <dbReference type="ChEBI" id="CHEBI:85987"/>
        <dbReference type="EC" id="2.4.99.13"/>
    </reaction>
</comment>
<comment type="pathway">
    <text evidence="4">Glycolipid biosynthesis; KDO(2)-lipid A biosynthesis; KDO(2)-lipid A from CMP-3-deoxy-D-manno-octulosonate and lipid IV(A): step 1/4.</text>
</comment>
<comment type="pathway">
    <text evidence="4">Glycolipid biosynthesis; KDO(2)-lipid A biosynthesis; KDO(2)-lipid A from CMP-3-deoxy-D-manno-octulosonate and lipid IV(A): step 2/4.</text>
</comment>
<comment type="subcellular location">
    <subcellularLocation>
        <location evidence="3">Mitochondrion</location>
    </subcellularLocation>
</comment>
<comment type="tissue specificity">
    <text evidence="3">Expressed in leaves, stems and flowers.</text>
</comment>
<comment type="disruption phenotype">
    <text evidence="3 4">No visible phenotype under normal growth conditions, but plants lacking KDTA accumulate high levels of tetraacyldisaccharide 1,4'-bis-phosphate (lipid IVA).</text>
</comment>
<comment type="similarity">
    <text evidence="5">Belongs to the glycosyltransferase group 1 family. Glycosyltransferase 30 subfamily.</text>
</comment>
<comment type="sequence caution" evidence="5">
    <conflict type="erroneous gene model prediction">
        <sequence resource="EMBL-CDS" id="BAB08602"/>
    </conflict>
</comment>
<comment type="sequence caution" evidence="5">
    <conflict type="erroneous gene model prediction">
        <sequence resource="EMBL-CDS" id="CAB82942"/>
    </conflict>
</comment>
<proteinExistence type="evidence at transcript level"/>